<protein>
    <recommendedName>
        <fullName evidence="2">Large ribosomal subunit protein bL20c</fullName>
    </recommendedName>
    <alternativeName>
        <fullName>50S ribosomal protein L20, chloroplastic</fullName>
    </alternativeName>
</protein>
<reference key="1">
    <citation type="journal article" date="1986" name="EMBO J.">
        <title>The complete nucleotide sequence of the tobacco chloroplast genome: its gene organization and expression.</title>
        <authorList>
            <person name="Shinozaki K."/>
            <person name="Ohme M."/>
            <person name="Tanaka M."/>
            <person name="Wakasugi T."/>
            <person name="Hayashida N."/>
            <person name="Matsubayashi T."/>
            <person name="Zaita N."/>
            <person name="Chunwongse J."/>
            <person name="Obokata J."/>
            <person name="Yamaguchi-Shinozaki K."/>
            <person name="Ohto C."/>
            <person name="Torazawa K."/>
            <person name="Meng B.-Y."/>
            <person name="Sugita M."/>
            <person name="Deno H."/>
            <person name="Kamogashira T."/>
            <person name="Yamada K."/>
            <person name="Kusuda J."/>
            <person name="Takaiwa F."/>
            <person name="Kato A."/>
            <person name="Tohdoh N."/>
            <person name="Shimada H."/>
            <person name="Sugiura M."/>
        </authorList>
    </citation>
    <scope>NUCLEOTIDE SEQUENCE [LARGE SCALE GENOMIC DNA]</scope>
    <source>
        <strain>cv. Bright Yellow 4</strain>
    </source>
</reference>
<gene>
    <name type="primary">rpl20</name>
</gene>
<comment type="function">
    <text evidence="1">Binds directly to 23S ribosomal RNA and is necessary for the in vitro assembly process of the 50S ribosomal subunit. It is not involved in the protein synthesizing functions of that subunit (By similarity).</text>
</comment>
<comment type="subcellular location">
    <subcellularLocation>
        <location>Plastid</location>
        <location>Chloroplast</location>
    </subcellularLocation>
</comment>
<comment type="similarity">
    <text evidence="2">Belongs to the bacterial ribosomal protein bL20 family.</text>
</comment>
<name>RK20_TOBAC</name>
<keyword id="KW-0150">Chloroplast</keyword>
<keyword id="KW-0934">Plastid</keyword>
<keyword id="KW-1185">Reference proteome</keyword>
<keyword id="KW-0687">Ribonucleoprotein</keyword>
<keyword id="KW-0689">Ribosomal protein</keyword>
<keyword id="KW-0694">RNA-binding</keyword>
<keyword id="KW-0699">rRNA-binding</keyword>
<geneLocation type="chloroplast"/>
<feature type="initiator methionine" description="Removed" evidence="1">
    <location>
        <position position="1"/>
    </location>
</feature>
<feature type="chain" id="PRO_0000177313" description="Large ribosomal subunit protein bL20c">
    <location>
        <begin position="2"/>
        <end position="128"/>
    </location>
</feature>
<evidence type="ECO:0000250" key="1"/>
<evidence type="ECO:0000305" key="2"/>
<accession>P06386</accession>
<dbReference type="EMBL" id="Z00044">
    <property type="protein sequence ID" value="CAA77372.1"/>
    <property type="molecule type" value="Genomic_DNA"/>
</dbReference>
<dbReference type="PIR" id="A02808">
    <property type="entry name" value="R5NT20"/>
</dbReference>
<dbReference type="RefSeq" id="NP_054524.1">
    <property type="nucleotide sequence ID" value="NC_001879.2"/>
</dbReference>
<dbReference type="SMR" id="P06386"/>
<dbReference type="GeneID" id="800465"/>
<dbReference type="KEGG" id="nta:800465"/>
<dbReference type="OMA" id="IHETEVF"/>
<dbReference type="OrthoDB" id="10251781at2759"/>
<dbReference type="Proteomes" id="UP000084051">
    <property type="component" value="Unplaced"/>
</dbReference>
<dbReference type="GO" id="GO:0009507">
    <property type="term" value="C:chloroplast"/>
    <property type="evidence" value="ECO:0007669"/>
    <property type="project" value="UniProtKB-SubCell"/>
</dbReference>
<dbReference type="GO" id="GO:1990904">
    <property type="term" value="C:ribonucleoprotein complex"/>
    <property type="evidence" value="ECO:0007669"/>
    <property type="project" value="UniProtKB-KW"/>
</dbReference>
<dbReference type="GO" id="GO:0005840">
    <property type="term" value="C:ribosome"/>
    <property type="evidence" value="ECO:0007669"/>
    <property type="project" value="UniProtKB-KW"/>
</dbReference>
<dbReference type="GO" id="GO:0019843">
    <property type="term" value="F:rRNA binding"/>
    <property type="evidence" value="ECO:0007669"/>
    <property type="project" value="UniProtKB-UniRule"/>
</dbReference>
<dbReference type="GO" id="GO:0003735">
    <property type="term" value="F:structural constituent of ribosome"/>
    <property type="evidence" value="ECO:0007669"/>
    <property type="project" value="InterPro"/>
</dbReference>
<dbReference type="GO" id="GO:0000027">
    <property type="term" value="P:ribosomal large subunit assembly"/>
    <property type="evidence" value="ECO:0007669"/>
    <property type="project" value="UniProtKB-UniRule"/>
</dbReference>
<dbReference type="GO" id="GO:0006412">
    <property type="term" value="P:translation"/>
    <property type="evidence" value="ECO:0007669"/>
    <property type="project" value="InterPro"/>
</dbReference>
<dbReference type="CDD" id="cd07026">
    <property type="entry name" value="Ribosomal_L20"/>
    <property type="match status" value="1"/>
</dbReference>
<dbReference type="FunFam" id="1.10.1900.20:FF:000001">
    <property type="entry name" value="50S ribosomal protein L20"/>
    <property type="match status" value="1"/>
</dbReference>
<dbReference type="Gene3D" id="6.10.160.10">
    <property type="match status" value="1"/>
</dbReference>
<dbReference type="Gene3D" id="1.10.1900.20">
    <property type="entry name" value="Ribosomal protein L20"/>
    <property type="match status" value="1"/>
</dbReference>
<dbReference type="HAMAP" id="MF_00382">
    <property type="entry name" value="Ribosomal_bL20"/>
    <property type="match status" value="1"/>
</dbReference>
<dbReference type="InterPro" id="IPR005813">
    <property type="entry name" value="Ribosomal_bL20"/>
</dbReference>
<dbReference type="InterPro" id="IPR049946">
    <property type="entry name" value="RIBOSOMAL_L20_CS"/>
</dbReference>
<dbReference type="InterPro" id="IPR035566">
    <property type="entry name" value="Ribosomal_protein_bL20_C"/>
</dbReference>
<dbReference type="NCBIfam" id="TIGR01032">
    <property type="entry name" value="rplT_bact"/>
    <property type="match status" value="1"/>
</dbReference>
<dbReference type="PANTHER" id="PTHR10986">
    <property type="entry name" value="39S RIBOSOMAL PROTEIN L20"/>
    <property type="match status" value="1"/>
</dbReference>
<dbReference type="Pfam" id="PF00453">
    <property type="entry name" value="Ribosomal_L20"/>
    <property type="match status" value="1"/>
</dbReference>
<dbReference type="PRINTS" id="PR00062">
    <property type="entry name" value="RIBOSOMALL20"/>
</dbReference>
<dbReference type="SUPFAM" id="SSF74731">
    <property type="entry name" value="Ribosomal protein L20"/>
    <property type="match status" value="1"/>
</dbReference>
<dbReference type="PROSITE" id="PS00937">
    <property type="entry name" value="RIBOSOMAL_L20"/>
    <property type="match status" value="1"/>
</dbReference>
<sequence length="128" mass="15541">MTRIKRGYIARRRRTKIRLFASSFRGAHSRLTRTITQQKIRALVSAHRDRDRKKRDFRRLWITRINAVIRERGVSYSYSRLIHDLYKRQLLLNRKILAQIAISNRNCLYMISNEIIKEVDWKESTRII</sequence>
<organism>
    <name type="scientific">Nicotiana tabacum</name>
    <name type="common">Common tobacco</name>
    <dbReference type="NCBI Taxonomy" id="4097"/>
    <lineage>
        <taxon>Eukaryota</taxon>
        <taxon>Viridiplantae</taxon>
        <taxon>Streptophyta</taxon>
        <taxon>Embryophyta</taxon>
        <taxon>Tracheophyta</taxon>
        <taxon>Spermatophyta</taxon>
        <taxon>Magnoliopsida</taxon>
        <taxon>eudicotyledons</taxon>
        <taxon>Gunneridae</taxon>
        <taxon>Pentapetalae</taxon>
        <taxon>asterids</taxon>
        <taxon>lamiids</taxon>
        <taxon>Solanales</taxon>
        <taxon>Solanaceae</taxon>
        <taxon>Nicotianoideae</taxon>
        <taxon>Nicotianeae</taxon>
        <taxon>Nicotiana</taxon>
    </lineage>
</organism>
<proteinExistence type="inferred from homology"/>